<feature type="chain" id="PRO_0000107402" description="Acetyl-CoA acetyltransferase">
    <location>
        <begin position="1"/>
        <end position="392"/>
    </location>
</feature>
<feature type="active site" description="Acyl-thioester intermediate" evidence="2">
    <location>
        <position position="85"/>
    </location>
</feature>
<feature type="active site" description="Proton acceptor" evidence="2">
    <location>
        <position position="336"/>
    </location>
</feature>
<feature type="binding site" evidence="1">
    <location>
        <position position="206"/>
    </location>
    <ligand>
        <name>CoA</name>
        <dbReference type="ChEBI" id="CHEBI:57287"/>
        <note>ligand shared with HMG-CoA synthase</note>
    </ligand>
</feature>
<feature type="binding site" evidence="1">
    <location>
        <position position="207"/>
    </location>
    <ligand>
        <name>CoA</name>
        <dbReference type="ChEBI" id="CHEBI:57287"/>
        <note>ligand shared with HMG-CoA synthase</note>
    </ligand>
</feature>
<feature type="binding site" evidence="1">
    <location>
        <position position="209"/>
    </location>
    <ligand>
        <name>CoA</name>
        <dbReference type="ChEBI" id="CHEBI:57287"/>
        <note>ligand shared with HMG-CoA synthase</note>
    </ligand>
</feature>
<feature type="binding site" evidence="1">
    <location>
        <position position="332"/>
    </location>
    <ligand>
        <name>CoA</name>
        <dbReference type="ChEBI" id="CHEBI:57287"/>
        <note>ligand shared with HMG-CoA synthase</note>
    </ligand>
</feature>
<reference key="1">
    <citation type="journal article" date="1996" name="Science">
        <title>Complete genome sequence of the methanogenic archaeon, Methanococcus jannaschii.</title>
        <authorList>
            <person name="Bult C.J."/>
            <person name="White O."/>
            <person name="Olsen G.J."/>
            <person name="Zhou L."/>
            <person name="Fleischmann R.D."/>
            <person name="Sutton G.G."/>
            <person name="Blake J.A."/>
            <person name="FitzGerald L.M."/>
            <person name="Clayton R.A."/>
            <person name="Gocayne J.D."/>
            <person name="Kerlavage A.R."/>
            <person name="Dougherty B.A."/>
            <person name="Tomb J.-F."/>
            <person name="Adams M.D."/>
            <person name="Reich C.I."/>
            <person name="Overbeek R."/>
            <person name="Kirkness E.F."/>
            <person name="Weinstock K.G."/>
            <person name="Merrick J.M."/>
            <person name="Glodek A."/>
            <person name="Scott J.L."/>
            <person name="Geoghagen N.S.M."/>
            <person name="Weidman J.F."/>
            <person name="Fuhrmann J.L."/>
            <person name="Nguyen D."/>
            <person name="Utterback T.R."/>
            <person name="Kelley J.M."/>
            <person name="Peterson J.D."/>
            <person name="Sadow P.W."/>
            <person name="Hanna M.C."/>
            <person name="Cotton M.D."/>
            <person name="Roberts K.M."/>
            <person name="Hurst M.A."/>
            <person name="Kaine B.P."/>
            <person name="Borodovsky M."/>
            <person name="Klenk H.-P."/>
            <person name="Fraser C.M."/>
            <person name="Smith H.O."/>
            <person name="Woese C.R."/>
            <person name="Venter J.C."/>
        </authorList>
    </citation>
    <scope>NUCLEOTIDE SEQUENCE [LARGE SCALE GENOMIC DNA]</scope>
    <source>
        <strain>ATCC 43067 / DSM 2661 / JAL-1 / JCM 10045 / NBRC 100440</strain>
    </source>
</reference>
<sequence>MRDVAIIGYGQTKFGELWERSFRSLIVEAGVKAVEAAGIDGKDIDEMYVGNMSAGLFVGQEHIASLIAEHAGLNPIPSTRVEAACASGSLALRQAVLNVASGASDVVLVGGVEKMTDVVDATSAISSASDQEWEALFGATFPSLYAMMAQRYMYEYGLTLEELSMWSVIMHENASKNRYAQFPFKVTLEQVLNSSPVAEPLRLLHCSPVSDGAAALIVCEAEKAKEFVNKDDIIYIKASVQASDTIALHSRESITSLKAAKVASEKAYKMANIEPKDVDVAEVHDCFAINGLILMEELGFCKKGEAGKIVYDKKIAIDYDGFPAVNPSGGLKAAGHALGATGIRQVGEIYWQLKQDKEVKDRQVEIKNGYGITVNVGGTGGTVCIHILSDKR</sequence>
<dbReference type="EC" id="2.3.1.9" evidence="1"/>
<dbReference type="EMBL" id="L77117">
    <property type="protein sequence ID" value="AAB99567.1"/>
    <property type="molecule type" value="Genomic_DNA"/>
</dbReference>
<dbReference type="PIR" id="D64493">
    <property type="entry name" value="D64493"/>
</dbReference>
<dbReference type="RefSeq" id="WP_010871073.1">
    <property type="nucleotide sequence ID" value="NC_000909.1"/>
</dbReference>
<dbReference type="SMR" id="Q58944"/>
<dbReference type="FunCoup" id="Q58944">
    <property type="interactions" value="214"/>
</dbReference>
<dbReference type="STRING" id="243232.MJ_1549"/>
<dbReference type="PaxDb" id="243232-MJ_1549"/>
<dbReference type="EnsemblBacteria" id="AAB99567">
    <property type="protein sequence ID" value="AAB99567"/>
    <property type="gene ID" value="MJ_1549"/>
</dbReference>
<dbReference type="GeneID" id="1452457"/>
<dbReference type="KEGG" id="mja:MJ_1549"/>
<dbReference type="eggNOG" id="arCOG01278">
    <property type="taxonomic scope" value="Archaea"/>
</dbReference>
<dbReference type="HOGENOM" id="CLU_035425_4_0_2"/>
<dbReference type="InParanoid" id="Q58944"/>
<dbReference type="OrthoDB" id="167534at2157"/>
<dbReference type="PhylomeDB" id="Q58944"/>
<dbReference type="UniPathway" id="UPA00058">
    <property type="reaction ID" value="UER00101"/>
</dbReference>
<dbReference type="Proteomes" id="UP000000805">
    <property type="component" value="Chromosome"/>
</dbReference>
<dbReference type="GO" id="GO:0016746">
    <property type="term" value="F:acyltransferase activity"/>
    <property type="evidence" value="ECO:0000318"/>
    <property type="project" value="GO_Central"/>
</dbReference>
<dbReference type="GO" id="GO:0016747">
    <property type="term" value="F:acyltransferase activity, transferring groups other than amino-acyl groups"/>
    <property type="evidence" value="ECO:0007669"/>
    <property type="project" value="InterPro"/>
</dbReference>
<dbReference type="GO" id="GO:0008299">
    <property type="term" value="P:isoprenoid biosynthetic process"/>
    <property type="evidence" value="ECO:0007669"/>
    <property type="project" value="UniProtKB-KW"/>
</dbReference>
<dbReference type="CDD" id="cd00829">
    <property type="entry name" value="SCP-x_thiolase"/>
    <property type="match status" value="1"/>
</dbReference>
<dbReference type="Gene3D" id="3.40.47.10">
    <property type="match status" value="1"/>
</dbReference>
<dbReference type="InterPro" id="IPR002155">
    <property type="entry name" value="Thiolase"/>
</dbReference>
<dbReference type="InterPro" id="IPR016039">
    <property type="entry name" value="Thiolase-like"/>
</dbReference>
<dbReference type="InterPro" id="IPR055140">
    <property type="entry name" value="Thiolase_C_2"/>
</dbReference>
<dbReference type="InterPro" id="IPR020616">
    <property type="entry name" value="Thiolase_N"/>
</dbReference>
<dbReference type="NCBIfam" id="NF004720">
    <property type="entry name" value="PRK06064.1"/>
    <property type="match status" value="1"/>
</dbReference>
<dbReference type="PANTHER" id="PTHR42870">
    <property type="entry name" value="ACETYL-COA C-ACETYLTRANSFERASE"/>
    <property type="match status" value="1"/>
</dbReference>
<dbReference type="PANTHER" id="PTHR42870:SF6">
    <property type="entry name" value="ACETYL-COA C-ACYLTRANSFERASE"/>
    <property type="match status" value="1"/>
</dbReference>
<dbReference type="Pfam" id="PF22691">
    <property type="entry name" value="Thiolase_C_1"/>
    <property type="match status" value="1"/>
</dbReference>
<dbReference type="Pfam" id="PF00108">
    <property type="entry name" value="Thiolase_N"/>
    <property type="match status" value="1"/>
</dbReference>
<dbReference type="PIRSF" id="PIRSF000429">
    <property type="entry name" value="Ac-CoA_Ac_transf"/>
    <property type="match status" value="1"/>
</dbReference>
<dbReference type="SUPFAM" id="SSF53901">
    <property type="entry name" value="Thiolase-like"/>
    <property type="match status" value="2"/>
</dbReference>
<gene>
    <name type="ordered locus">MJ1549</name>
</gene>
<keyword id="KW-0012">Acyltransferase</keyword>
<keyword id="KW-0414">Isoprene biosynthesis</keyword>
<keyword id="KW-1185">Reference proteome</keyword>
<keyword id="KW-0808">Transferase</keyword>
<proteinExistence type="inferred from homology"/>
<name>THIOL_METJA</name>
<protein>
    <recommendedName>
        <fullName evidence="3">Acetyl-CoA acetyltransferase</fullName>
        <ecNumber evidence="1">2.3.1.9</ecNumber>
    </recommendedName>
    <alternativeName>
        <fullName evidence="3">Acetoacetyl-CoA thiolase</fullName>
    </alternativeName>
</protein>
<accession>Q58944</accession>
<evidence type="ECO:0000250" key="1">
    <source>
        <dbReference type="UniProtKB" id="A0A384E138"/>
    </source>
</evidence>
<evidence type="ECO:0000250" key="2">
    <source>
        <dbReference type="UniProtKB" id="P14611"/>
    </source>
</evidence>
<evidence type="ECO:0000305" key="3"/>
<comment type="function">
    <text evidence="1">Catalyzes the condensation of two acetyl-coA molecules into acetoacetyl-CoA. Functions in the mevalonate (MVA) pathway leading to isopentenyl diphosphate (IPP), a key precursor for the biosynthesis of isoprenoid compounds that are building blocks of archaeal membrane lipids.</text>
</comment>
<comment type="catalytic activity">
    <reaction evidence="1">
        <text>2 acetyl-CoA = acetoacetyl-CoA + CoA</text>
        <dbReference type="Rhea" id="RHEA:21036"/>
        <dbReference type="ChEBI" id="CHEBI:57286"/>
        <dbReference type="ChEBI" id="CHEBI:57287"/>
        <dbReference type="ChEBI" id="CHEBI:57288"/>
        <dbReference type="EC" id="2.3.1.9"/>
    </reaction>
    <physiologicalReaction direction="left-to-right" evidence="1">
        <dbReference type="Rhea" id="RHEA:21037"/>
    </physiologicalReaction>
</comment>
<comment type="pathway">
    <text evidence="1">Metabolic intermediate biosynthesis; (R)-mevalonate biosynthesis; (R)-mevalonate from acetyl-CoA: step 1/3.</text>
</comment>
<comment type="subunit">
    <text evidence="1">Interacts with HMG-CoA synthase (HMGCS) that catalyzes the second step in the pathway and with a DUF35 protein. The acetoacetyl-CoA thiolase/HMG-CoA synthase complex channels the intermediate via a fused CoA-binding site, which allows for efficient coupling of the endergonic thiolase reaction with the exergonic HMGCS reaction.</text>
</comment>
<comment type="similarity">
    <text evidence="3">Belongs to the thiolase-like superfamily. Thiolase family.</text>
</comment>
<organism>
    <name type="scientific">Methanocaldococcus jannaschii (strain ATCC 43067 / DSM 2661 / JAL-1 / JCM 10045 / NBRC 100440)</name>
    <name type="common">Methanococcus jannaschii</name>
    <dbReference type="NCBI Taxonomy" id="243232"/>
    <lineage>
        <taxon>Archaea</taxon>
        <taxon>Methanobacteriati</taxon>
        <taxon>Methanobacteriota</taxon>
        <taxon>Methanomada group</taxon>
        <taxon>Methanococci</taxon>
        <taxon>Methanococcales</taxon>
        <taxon>Methanocaldococcaceae</taxon>
        <taxon>Methanocaldococcus</taxon>
    </lineage>
</organism>